<accession>B5QTF3</accession>
<reference key="1">
    <citation type="journal article" date="2008" name="Genome Res.">
        <title>Comparative genome analysis of Salmonella enteritidis PT4 and Salmonella gallinarum 287/91 provides insights into evolutionary and host adaptation pathways.</title>
        <authorList>
            <person name="Thomson N.R."/>
            <person name="Clayton D.J."/>
            <person name="Windhorst D."/>
            <person name="Vernikos G."/>
            <person name="Davidson S."/>
            <person name="Churcher C."/>
            <person name="Quail M.A."/>
            <person name="Stevens M."/>
            <person name="Jones M.A."/>
            <person name="Watson M."/>
            <person name="Barron A."/>
            <person name="Layton A."/>
            <person name="Pickard D."/>
            <person name="Kingsley R.A."/>
            <person name="Bignell A."/>
            <person name="Clark L."/>
            <person name="Harris B."/>
            <person name="Ormond D."/>
            <person name="Abdellah Z."/>
            <person name="Brooks K."/>
            <person name="Cherevach I."/>
            <person name="Chillingworth T."/>
            <person name="Woodward J."/>
            <person name="Norberczak H."/>
            <person name="Lord A."/>
            <person name="Arrowsmith C."/>
            <person name="Jagels K."/>
            <person name="Moule S."/>
            <person name="Mungall K."/>
            <person name="Saunders M."/>
            <person name="Whitehead S."/>
            <person name="Chabalgoity J.A."/>
            <person name="Maskell D."/>
            <person name="Humphreys T."/>
            <person name="Roberts M."/>
            <person name="Barrow P.A."/>
            <person name="Dougan G."/>
            <person name="Parkhill J."/>
        </authorList>
    </citation>
    <scope>NUCLEOTIDE SEQUENCE [LARGE SCALE GENOMIC DNA]</scope>
    <source>
        <strain>P125109</strain>
    </source>
</reference>
<proteinExistence type="inferred from homology"/>
<sequence>MRVTDFSFELPESLIAHYPQPERSRCRLLSLEGPTGALTHGTFTDLLDKLNPGDLLVFNNTRVIPARLFGRKASGGKIEVLVERMLDDKRILAHIRASKAPKPGTELLLGDDESIHATMTARHGALFEVEFNDPRPVLDILNAIGHMPLPPYIDRPDEDADRELYQTVYSEKPGAVAAPTAGLHFDEPLLAALREKGIEMAFVTLHVGAGTFQPVRVDTIEDHIMHSEYAEVPQEVVDAVLAAKARGNRVIAVGTTSVRSLESAAQAAKNDLIEPFFGDTQIFIYPGYQYKVIDALITNFHLPESTLIMLVSAFAGYQHTMNAYKTAVEQKYRFFSYGDAMFITYNPQAISERP</sequence>
<organism>
    <name type="scientific">Salmonella enteritidis PT4 (strain P125109)</name>
    <dbReference type="NCBI Taxonomy" id="550537"/>
    <lineage>
        <taxon>Bacteria</taxon>
        <taxon>Pseudomonadati</taxon>
        <taxon>Pseudomonadota</taxon>
        <taxon>Gammaproteobacteria</taxon>
        <taxon>Enterobacterales</taxon>
        <taxon>Enterobacteriaceae</taxon>
        <taxon>Salmonella</taxon>
    </lineage>
</organism>
<protein>
    <recommendedName>
        <fullName evidence="1">S-adenosylmethionine:tRNA ribosyltransferase-isomerase</fullName>
        <ecNumber evidence="1">2.4.99.17</ecNumber>
    </recommendedName>
    <alternativeName>
        <fullName evidence="1">Queuosine biosynthesis protein QueA</fullName>
    </alternativeName>
</protein>
<dbReference type="EC" id="2.4.99.17" evidence="1"/>
<dbReference type="EMBL" id="AM933172">
    <property type="protein sequence ID" value="CAR31973.1"/>
    <property type="molecule type" value="Genomic_DNA"/>
</dbReference>
<dbReference type="RefSeq" id="WP_001266522.1">
    <property type="nucleotide sequence ID" value="NC_011294.1"/>
</dbReference>
<dbReference type="SMR" id="B5QTF3"/>
<dbReference type="KEGG" id="set:SEN0387"/>
<dbReference type="HOGENOM" id="CLU_039110_1_0_6"/>
<dbReference type="UniPathway" id="UPA00392"/>
<dbReference type="Proteomes" id="UP000000613">
    <property type="component" value="Chromosome"/>
</dbReference>
<dbReference type="GO" id="GO:0005737">
    <property type="term" value="C:cytoplasm"/>
    <property type="evidence" value="ECO:0007669"/>
    <property type="project" value="UniProtKB-SubCell"/>
</dbReference>
<dbReference type="GO" id="GO:0051075">
    <property type="term" value="F:S-adenosylmethionine:tRNA ribosyltransferase-isomerase activity"/>
    <property type="evidence" value="ECO:0007669"/>
    <property type="project" value="UniProtKB-EC"/>
</dbReference>
<dbReference type="GO" id="GO:0008616">
    <property type="term" value="P:queuosine biosynthetic process"/>
    <property type="evidence" value="ECO:0007669"/>
    <property type="project" value="UniProtKB-UniRule"/>
</dbReference>
<dbReference type="GO" id="GO:0002099">
    <property type="term" value="P:tRNA wobble guanine modification"/>
    <property type="evidence" value="ECO:0007669"/>
    <property type="project" value="TreeGrafter"/>
</dbReference>
<dbReference type="FunFam" id="2.40.10.240:FF:000001">
    <property type="entry name" value="S-adenosylmethionine:tRNA ribosyltransferase-isomerase"/>
    <property type="match status" value="1"/>
</dbReference>
<dbReference type="FunFam" id="3.40.1780.10:FF:000001">
    <property type="entry name" value="S-adenosylmethionine:tRNA ribosyltransferase-isomerase"/>
    <property type="match status" value="1"/>
</dbReference>
<dbReference type="Gene3D" id="2.40.10.240">
    <property type="entry name" value="QueA-like"/>
    <property type="match status" value="1"/>
</dbReference>
<dbReference type="Gene3D" id="3.40.1780.10">
    <property type="entry name" value="QueA-like"/>
    <property type="match status" value="1"/>
</dbReference>
<dbReference type="HAMAP" id="MF_00113">
    <property type="entry name" value="QueA"/>
    <property type="match status" value="1"/>
</dbReference>
<dbReference type="InterPro" id="IPR003699">
    <property type="entry name" value="QueA"/>
</dbReference>
<dbReference type="InterPro" id="IPR042118">
    <property type="entry name" value="QueA_dom1"/>
</dbReference>
<dbReference type="InterPro" id="IPR042119">
    <property type="entry name" value="QueA_dom2"/>
</dbReference>
<dbReference type="InterPro" id="IPR036100">
    <property type="entry name" value="QueA_sf"/>
</dbReference>
<dbReference type="NCBIfam" id="NF001140">
    <property type="entry name" value="PRK00147.1"/>
    <property type="match status" value="1"/>
</dbReference>
<dbReference type="NCBIfam" id="TIGR00113">
    <property type="entry name" value="queA"/>
    <property type="match status" value="1"/>
</dbReference>
<dbReference type="PANTHER" id="PTHR30307">
    <property type="entry name" value="S-ADENOSYLMETHIONINE:TRNA RIBOSYLTRANSFERASE-ISOMERASE"/>
    <property type="match status" value="1"/>
</dbReference>
<dbReference type="PANTHER" id="PTHR30307:SF0">
    <property type="entry name" value="S-ADENOSYLMETHIONINE:TRNA RIBOSYLTRANSFERASE-ISOMERASE"/>
    <property type="match status" value="1"/>
</dbReference>
<dbReference type="Pfam" id="PF02547">
    <property type="entry name" value="Queuosine_synth"/>
    <property type="match status" value="1"/>
</dbReference>
<dbReference type="SUPFAM" id="SSF111337">
    <property type="entry name" value="QueA-like"/>
    <property type="match status" value="1"/>
</dbReference>
<gene>
    <name evidence="1" type="primary">queA</name>
    <name type="ordered locus">SEN0387</name>
</gene>
<evidence type="ECO:0000255" key="1">
    <source>
        <dbReference type="HAMAP-Rule" id="MF_00113"/>
    </source>
</evidence>
<feature type="chain" id="PRO_1000094811" description="S-adenosylmethionine:tRNA ribosyltransferase-isomerase">
    <location>
        <begin position="1"/>
        <end position="354"/>
    </location>
</feature>
<name>QUEA_SALEP</name>
<comment type="function">
    <text evidence="1">Transfers and isomerizes the ribose moiety from AdoMet to the 7-aminomethyl group of 7-deazaguanine (preQ1-tRNA) to give epoxyqueuosine (oQ-tRNA).</text>
</comment>
<comment type="catalytic activity">
    <reaction evidence="1">
        <text>7-aminomethyl-7-carbaguanosine(34) in tRNA + S-adenosyl-L-methionine = epoxyqueuosine(34) in tRNA + adenine + L-methionine + 2 H(+)</text>
        <dbReference type="Rhea" id="RHEA:32155"/>
        <dbReference type="Rhea" id="RHEA-COMP:10342"/>
        <dbReference type="Rhea" id="RHEA-COMP:18582"/>
        <dbReference type="ChEBI" id="CHEBI:15378"/>
        <dbReference type="ChEBI" id="CHEBI:16708"/>
        <dbReference type="ChEBI" id="CHEBI:57844"/>
        <dbReference type="ChEBI" id="CHEBI:59789"/>
        <dbReference type="ChEBI" id="CHEBI:82833"/>
        <dbReference type="ChEBI" id="CHEBI:194443"/>
        <dbReference type="EC" id="2.4.99.17"/>
    </reaction>
</comment>
<comment type="pathway">
    <text evidence="1">tRNA modification; tRNA-queuosine biosynthesis.</text>
</comment>
<comment type="subunit">
    <text evidence="1">Monomer.</text>
</comment>
<comment type="subcellular location">
    <subcellularLocation>
        <location evidence="1">Cytoplasm</location>
    </subcellularLocation>
</comment>
<comment type="similarity">
    <text evidence="1">Belongs to the QueA family.</text>
</comment>
<keyword id="KW-0963">Cytoplasm</keyword>
<keyword id="KW-0671">Queuosine biosynthesis</keyword>
<keyword id="KW-0949">S-adenosyl-L-methionine</keyword>
<keyword id="KW-0808">Transferase</keyword>